<sequence>QPSPVPVGATVMVWIYGGGFMSGTASLDVYDGRYIAATQGVIVASMNYRTGAMGFLSLGNSEAPGNAGLMDQNLALTWIKENVASFGGDQSKVSIFGESAGAASVSYHLLSPMSKNLFQRAIMESASALSPWALLPDAEAHRRGVELAKAVGCSTDSDIEETIECMRGVPALTISENEWVVWGLCQFPFAPVVDGNFIREHPTVSLQTGNLKQTDVMVGFNNDEGVYFLLYGAPGFSKDTQSLITRDQYLEGIKMSVMGINDISVDALSFQYIDWVNFDQPSMYRDAIDNLSGDYNFICPALSFGKAMASFMGRKTYQYKFVHQASNFPWPKWTGVM</sequence>
<feature type="chain" id="PRO_0000070290" description="Cholinesterase 2">
    <location>
        <begin position="1" status="less than"/>
        <end position="337" status="greater than"/>
    </location>
</feature>
<feature type="active site" description="Acyl-ester intermediate" evidence="3">
    <location>
        <position position="99"/>
    </location>
</feature>
<feature type="active site" description="Charge relay system" evidence="1">
    <location>
        <position position="224"/>
    </location>
</feature>
<feature type="glycosylation site" description="N-linked (GlcNAc...) asparagine" evidence="2">
    <location>
        <position position="290"/>
    </location>
</feature>
<feature type="disulfide bond" evidence="1">
    <location>
        <begin position="153"/>
        <end position="165"/>
    </location>
</feature>
<feature type="non-terminal residue">
    <location>
        <position position="1"/>
    </location>
</feature>
<feature type="non-terminal residue">
    <location>
        <position position="337"/>
    </location>
</feature>
<organism>
    <name type="scientific">Branchiostoma lanceolatum</name>
    <name type="common">Common lancelet</name>
    <name type="synonym">Amphioxus lanceolatum</name>
    <dbReference type="NCBI Taxonomy" id="7740"/>
    <lineage>
        <taxon>Eukaryota</taxon>
        <taxon>Metazoa</taxon>
        <taxon>Chordata</taxon>
        <taxon>Cephalochordata</taxon>
        <taxon>Leptocardii</taxon>
        <taxon>Amphioxiformes</taxon>
        <taxon>Branchiostomatidae</taxon>
        <taxon>Branchiostoma</taxon>
    </lineage>
</organism>
<name>CHLE2_BRALA</name>
<accession>Q95001</accession>
<comment type="catalytic activity">
    <reaction>
        <text>an acylcholine + H2O = a carboxylate + choline + H(+)</text>
        <dbReference type="Rhea" id="RHEA:21964"/>
        <dbReference type="ChEBI" id="CHEBI:15354"/>
        <dbReference type="ChEBI" id="CHEBI:15377"/>
        <dbReference type="ChEBI" id="CHEBI:15378"/>
        <dbReference type="ChEBI" id="CHEBI:29067"/>
        <dbReference type="ChEBI" id="CHEBI:35287"/>
        <dbReference type="EC" id="3.1.1.8"/>
    </reaction>
</comment>
<comment type="similarity">
    <text evidence="4">Belongs to the type-B carboxylesterase/lipase family.</text>
</comment>
<proteinExistence type="inferred from homology"/>
<reference key="1">
    <citation type="journal article" date="1997" name="J. Exp. Zool.">
        <title>Two cholinesterase activities and genes are present in amphioxus.</title>
        <authorList>
            <person name="Sutherland D."/>
            <person name="McClellan J.S."/>
            <person name="Milner D."/>
            <person name="Soong W."/>
            <person name="Axon N."/>
            <person name="Sanders M."/>
            <person name="Hester A."/>
            <person name="Kao Y.H."/>
            <person name="Poczatek T."/>
            <person name="Routt S."/>
            <person name="Pezzementi L."/>
        </authorList>
    </citation>
    <scope>NUCLEOTIDE SEQUENCE [GENOMIC DNA]</scope>
</reference>
<gene>
    <name type="primary">CHE2</name>
</gene>
<protein>
    <recommendedName>
        <fullName>Cholinesterase 2</fullName>
        <ecNumber>3.1.1.8</ecNumber>
    </recommendedName>
</protein>
<keyword id="KW-1015">Disulfide bond</keyword>
<keyword id="KW-0325">Glycoprotein</keyword>
<keyword id="KW-0378">Hydrolase</keyword>
<keyword id="KW-0719">Serine esterase</keyword>
<dbReference type="EC" id="3.1.1.8"/>
<dbReference type="EMBL" id="U74379">
    <property type="protein sequence ID" value="AAB18263.1"/>
    <property type="molecule type" value="Genomic_DNA"/>
</dbReference>
<dbReference type="SMR" id="Q95001"/>
<dbReference type="MEROPS" id="S09.980"/>
<dbReference type="GlyCosmos" id="Q95001">
    <property type="glycosylation" value="1 site, No reported glycans"/>
</dbReference>
<dbReference type="GO" id="GO:0005615">
    <property type="term" value="C:extracellular space"/>
    <property type="evidence" value="ECO:0007669"/>
    <property type="project" value="TreeGrafter"/>
</dbReference>
<dbReference type="GO" id="GO:0005886">
    <property type="term" value="C:plasma membrane"/>
    <property type="evidence" value="ECO:0007669"/>
    <property type="project" value="TreeGrafter"/>
</dbReference>
<dbReference type="GO" id="GO:0003990">
    <property type="term" value="F:acetylcholinesterase activity"/>
    <property type="evidence" value="ECO:0007669"/>
    <property type="project" value="TreeGrafter"/>
</dbReference>
<dbReference type="GO" id="GO:0006581">
    <property type="term" value="P:acetylcholine catabolic process"/>
    <property type="evidence" value="ECO:0007669"/>
    <property type="project" value="TreeGrafter"/>
</dbReference>
<dbReference type="GO" id="GO:0019695">
    <property type="term" value="P:choline metabolic process"/>
    <property type="evidence" value="ECO:0007669"/>
    <property type="project" value="TreeGrafter"/>
</dbReference>
<dbReference type="Gene3D" id="3.40.50.1820">
    <property type="entry name" value="alpha/beta hydrolase"/>
    <property type="match status" value="1"/>
</dbReference>
<dbReference type="InterPro" id="IPR029058">
    <property type="entry name" value="AB_hydrolase_fold"/>
</dbReference>
<dbReference type="InterPro" id="IPR050654">
    <property type="entry name" value="AChE-related_enzymes"/>
</dbReference>
<dbReference type="InterPro" id="IPR002018">
    <property type="entry name" value="CarbesteraseB"/>
</dbReference>
<dbReference type="InterPro" id="IPR019826">
    <property type="entry name" value="Carboxylesterase_B_AS"/>
</dbReference>
<dbReference type="InterPro" id="IPR000997">
    <property type="entry name" value="Cholinesterase"/>
</dbReference>
<dbReference type="PANTHER" id="PTHR43918">
    <property type="entry name" value="ACETYLCHOLINESTERASE"/>
    <property type="match status" value="1"/>
</dbReference>
<dbReference type="PANTHER" id="PTHR43918:SF12">
    <property type="entry name" value="ACETYLCHOLINESTERASE 1"/>
    <property type="match status" value="1"/>
</dbReference>
<dbReference type="Pfam" id="PF00135">
    <property type="entry name" value="COesterase"/>
    <property type="match status" value="1"/>
</dbReference>
<dbReference type="PRINTS" id="PR00878">
    <property type="entry name" value="CHOLNESTRASE"/>
</dbReference>
<dbReference type="SUPFAM" id="SSF53474">
    <property type="entry name" value="alpha/beta-Hydrolases"/>
    <property type="match status" value="1"/>
</dbReference>
<dbReference type="PROSITE" id="PS00122">
    <property type="entry name" value="CARBOXYLESTERASE_B_1"/>
    <property type="match status" value="1"/>
</dbReference>
<evidence type="ECO:0000250" key="1"/>
<evidence type="ECO:0000255" key="2"/>
<evidence type="ECO:0000255" key="3">
    <source>
        <dbReference type="PROSITE-ProRule" id="PRU10039"/>
    </source>
</evidence>
<evidence type="ECO:0000305" key="4"/>